<dbReference type="EMBL" id="AK014766">
    <property type="protein sequence ID" value="BAB29540.1"/>
    <property type="molecule type" value="mRNA"/>
</dbReference>
<dbReference type="EMBL" id="AK039171">
    <property type="protein sequence ID" value="BAC30264.1"/>
    <property type="molecule type" value="mRNA"/>
</dbReference>
<dbReference type="EMBL" id="AL833780">
    <property type="status" value="NOT_ANNOTATED_CDS"/>
    <property type="molecule type" value="Genomic_DNA"/>
</dbReference>
<dbReference type="EMBL" id="BC043311">
    <property type="protein sequence ID" value="AAH43311.1"/>
    <property type="status" value="ALT_INIT"/>
    <property type="molecule type" value="mRNA"/>
</dbReference>
<dbReference type="EMBL" id="BC058173">
    <property type="protein sequence ID" value="AAH58173.1"/>
    <property type="molecule type" value="mRNA"/>
</dbReference>
<dbReference type="CCDS" id="CCDS50707.1">
    <molecule id="Q8BYK8-1"/>
</dbReference>
<dbReference type="SMR" id="Q8BYK8"/>
<dbReference type="FunCoup" id="Q8BYK8">
    <property type="interactions" value="2589"/>
</dbReference>
<dbReference type="STRING" id="10090.ENSMUSP00000105949"/>
<dbReference type="GlyGen" id="Q8BYK8">
    <property type="glycosylation" value="2 sites"/>
</dbReference>
<dbReference type="iPTMnet" id="Q8BYK8"/>
<dbReference type="PhosphoSitePlus" id="Q8BYK8"/>
<dbReference type="PaxDb" id="10090-ENSMUSP00000105949"/>
<dbReference type="ProteomicsDB" id="302044">
    <molecule id="Q8BYK8-1"/>
</dbReference>
<dbReference type="ProteomicsDB" id="302045">
    <molecule id="Q8BYK8-2"/>
</dbReference>
<dbReference type="Antibodypedia" id="47909">
    <property type="antibodies" value="16 antibodies from 7 providers"/>
</dbReference>
<dbReference type="Ensembl" id="ENSMUST00000110319.3">
    <molecule id="Q8BYK8-2"/>
    <property type="protein sequence ID" value="ENSMUSP00000105948.3"/>
    <property type="gene ID" value="ENSMUSG00000042851.18"/>
</dbReference>
<dbReference type="UCSC" id="uc008mha.2">
    <molecule id="Q8BYK8-2"/>
    <property type="organism name" value="mouse"/>
</dbReference>
<dbReference type="AGR" id="MGI:1926001"/>
<dbReference type="MGI" id="MGI:1926001">
    <property type="gene designation" value="Zc3h6"/>
</dbReference>
<dbReference type="VEuPathDB" id="HostDB:ENSMUSG00000042851"/>
<dbReference type="eggNOG" id="KOG1040">
    <property type="taxonomic scope" value="Eukaryota"/>
</dbReference>
<dbReference type="GeneTree" id="ENSGT00940000157396"/>
<dbReference type="HOGENOM" id="CLU_1730838_0_0_1"/>
<dbReference type="InParanoid" id="Q8BYK8"/>
<dbReference type="PhylomeDB" id="Q8BYK8"/>
<dbReference type="ChiTaRS" id="Zc3h6">
    <property type="organism name" value="mouse"/>
</dbReference>
<dbReference type="PRO" id="PR:Q8BYK8"/>
<dbReference type="Proteomes" id="UP000000589">
    <property type="component" value="Chromosome 2"/>
</dbReference>
<dbReference type="RNAct" id="Q8BYK8">
    <property type="molecule type" value="protein"/>
</dbReference>
<dbReference type="Bgee" id="ENSMUSG00000042851">
    <property type="expression patterns" value="Expressed in secondary oocyte and 206 other cell types or tissues"/>
</dbReference>
<dbReference type="ExpressionAtlas" id="Q8BYK8">
    <property type="expression patterns" value="baseline and differential"/>
</dbReference>
<dbReference type="GO" id="GO:0003723">
    <property type="term" value="F:RNA binding"/>
    <property type="evidence" value="ECO:0007669"/>
    <property type="project" value="InterPro"/>
</dbReference>
<dbReference type="GO" id="GO:0008270">
    <property type="term" value="F:zinc ion binding"/>
    <property type="evidence" value="ECO:0007669"/>
    <property type="project" value="UniProtKB-KW"/>
</dbReference>
<dbReference type="GO" id="GO:0045892">
    <property type="term" value="P:negative regulation of DNA-templated transcription"/>
    <property type="evidence" value="ECO:0007669"/>
    <property type="project" value="InterPro"/>
</dbReference>
<dbReference type="FunFam" id="4.10.1000.10:FF:000007">
    <property type="entry name" value="Zinc finger CCCH domain-containing protein 6"/>
    <property type="match status" value="1"/>
</dbReference>
<dbReference type="Gene3D" id="1.20.120.1350">
    <property type="entry name" value="Pneumovirus matrix protein 2 (M2), zinc-binding domain"/>
    <property type="match status" value="1"/>
</dbReference>
<dbReference type="Gene3D" id="4.10.1000.10">
    <property type="entry name" value="Zinc finger, CCCH-type"/>
    <property type="match status" value="1"/>
</dbReference>
<dbReference type="InterPro" id="IPR045124">
    <property type="entry name" value="Su(sable)-like"/>
</dbReference>
<dbReference type="InterPro" id="IPR054361">
    <property type="entry name" value="Znf-CCCH_ZC3H4/6/8"/>
</dbReference>
<dbReference type="InterPro" id="IPR000571">
    <property type="entry name" value="Znf_CCCH"/>
</dbReference>
<dbReference type="InterPro" id="IPR036855">
    <property type="entry name" value="Znf_CCCH_sf"/>
</dbReference>
<dbReference type="PANTHER" id="PTHR13119">
    <property type="entry name" value="ZINC FINGER CCCH DOMAIN-CONTAINING PROTEI"/>
    <property type="match status" value="1"/>
</dbReference>
<dbReference type="PANTHER" id="PTHR13119:SF22">
    <property type="entry name" value="ZINC FINGER CCCH DOMAIN-CONTAINING PROTEIN 6"/>
    <property type="match status" value="1"/>
</dbReference>
<dbReference type="Pfam" id="PF00642">
    <property type="entry name" value="zf-CCCH"/>
    <property type="match status" value="2"/>
</dbReference>
<dbReference type="Pfam" id="PF22623">
    <property type="entry name" value="zf-CCCH_9"/>
    <property type="match status" value="1"/>
</dbReference>
<dbReference type="SMART" id="SM00356">
    <property type="entry name" value="ZnF_C3H1"/>
    <property type="match status" value="3"/>
</dbReference>
<dbReference type="SUPFAM" id="SSF90229">
    <property type="entry name" value="CCCH zinc finger"/>
    <property type="match status" value="3"/>
</dbReference>
<dbReference type="PROSITE" id="PS50103">
    <property type="entry name" value="ZF_C3H1"/>
    <property type="match status" value="3"/>
</dbReference>
<comment type="alternative products">
    <event type="alternative splicing"/>
    <isoform>
        <id>Q8BYK8-1</id>
        <name>1</name>
        <sequence type="displayed"/>
    </isoform>
    <isoform>
        <id>Q8BYK8-2</id>
        <name>2</name>
        <sequence type="described" ref="VSP_010212 VSP_010213"/>
    </isoform>
</comment>
<comment type="sequence caution" evidence="7">
    <conflict type="erroneous initiation">
        <sequence resource="EMBL-CDS" id="AAH43311"/>
    </conflict>
</comment>
<accession>Q8BYK8</accession>
<accession>A2AP87</accession>
<accession>Q80UK3</accession>
<accession>Q8C1H1</accession>
<accession>Q9D604</accession>
<sequence>MTDSEHAGHDREDGELEDGEIDDAGFEETQDQEAKENEKQKNEKAYRKSRKKHKKEREKKKSKRRKHEKHKHNSPSGDDSSDYSLDSDVERMQSSRKKRTSSYRDYDVPFSQHRRISGSYMTSKKSQHNKKTNSKEYAESSFYSDDYFGNYSDDNFGNYSNQEGEEDFSSQLKYYRQSQESSGSSFSKESGKKLRSKGSPPGTEYRIKSFDVSHGHLLPKKIRRKEHCGARVIKGPYVFSGMDDFQEYSKPGKKWKVMTQEFINQHTVEHKGKQICKYFLEGRCIKGDHCKFNHDAELEKKKEVCKYYLQGYCTKGENCIYMHSEFPCKFYHSGAKCYQGDKCKFSHDDLTKETRKLLDKVLNADEELVNEDERELEELRKRGITPLPKPPPGVGLLPTPSEHFPFSDPEDDFETDLSDDMKKIPSLFEIVVKPTVDLAHKIGKKPPAFYNSTSPPGPQFEESSHCPQRMYSSESSPGPGSKVPQGCESPVRHPGSPGHHPCVGPPGPPMQENPSLLPSSSEIVGPHSQAGGLVQLDTLPSMGGAYHSPGFPGHSVKVPRESHSSPASLYQQMPSEMQRSADSESMQGSAEFYDDYYPQHAAHNFQPPDNSADEMWHEEFAQQQPPIARDTAHLGSGPNSSSRMTSHCPLSASGLPPAVQRALFIPLTQRYQEDEEPAGTQPHRASSKEEDDTANWYSSSEEEEGSGVKSILRTLQKQTGTLRNQQLPPTELSVPTDPRLAKEKRKRNQVVDPRLRTVPRQDIKKPHESVPVDLRLVWDPKKLRGNGGAPGGSSARGAEFDLRHTNAGANHKSKRREDDDEDSERELREKAFLIPLDSSPGIVLQDPRSQLRQFSHIKMDIILNKPNFAKHIVWAPEDLLPVPLPKPDPVSSINLPLPPLIADQRLNRLWNTKSDHQGALSLDPTSAAKAKLSLTHREGCLEQSGDLHSSGGKLGDPRLQKNFDPRLHRLPNTESHQVTAKDSHSSRSALPLARWNPALSQPSTAAPINVASVTPPLYAPKLSSEGLPPGTSSSVLSGISLYDPRDKGSLSATELSTISSGENTESQKKSGLKNSDKNQPSPGEVTVPQNTTADMEVPVDGPVDMQTDILRSADKVQVPAVHSLPIQALTGLLRPPYSDPRQAREPGQASPTPDEETDDKPLKEVFKTFDPTASPFC</sequence>
<organism>
    <name type="scientific">Mus musculus</name>
    <name type="common">Mouse</name>
    <dbReference type="NCBI Taxonomy" id="10090"/>
    <lineage>
        <taxon>Eukaryota</taxon>
        <taxon>Metazoa</taxon>
        <taxon>Chordata</taxon>
        <taxon>Craniata</taxon>
        <taxon>Vertebrata</taxon>
        <taxon>Euteleostomi</taxon>
        <taxon>Mammalia</taxon>
        <taxon>Eutheria</taxon>
        <taxon>Euarchontoglires</taxon>
        <taxon>Glires</taxon>
        <taxon>Rodentia</taxon>
        <taxon>Myomorpha</taxon>
        <taxon>Muroidea</taxon>
        <taxon>Muridae</taxon>
        <taxon>Murinae</taxon>
        <taxon>Mus</taxon>
        <taxon>Mus</taxon>
    </lineage>
</organism>
<feature type="chain" id="PRO_0000213902" description="Zinc finger CCCH domain-containing protein 6">
    <location>
        <begin position="1"/>
        <end position="1177"/>
    </location>
</feature>
<feature type="zinc finger region" description="C3H1-type 1" evidence="3">
    <location>
        <begin position="271"/>
        <end position="297"/>
    </location>
</feature>
<feature type="zinc finger region" description="C3H1-type 2" evidence="3">
    <location>
        <begin position="299"/>
        <end position="326"/>
    </location>
</feature>
<feature type="zinc finger region" description="C3H1-type 3" evidence="3">
    <location>
        <begin position="327"/>
        <end position="350"/>
    </location>
</feature>
<feature type="region of interest" description="Disordered" evidence="4">
    <location>
        <begin position="1"/>
        <end position="137"/>
    </location>
</feature>
<feature type="region of interest" description="Disordered" evidence="4">
    <location>
        <begin position="179"/>
        <end position="206"/>
    </location>
</feature>
<feature type="region of interest" description="Disordered" evidence="4">
    <location>
        <begin position="383"/>
        <end position="416"/>
    </location>
</feature>
<feature type="region of interest" description="Disordered" evidence="4">
    <location>
        <begin position="446"/>
        <end position="587"/>
    </location>
</feature>
<feature type="region of interest" description="Disordered" evidence="4">
    <location>
        <begin position="622"/>
        <end position="654"/>
    </location>
</feature>
<feature type="region of interest" description="Disordered" evidence="4">
    <location>
        <begin position="670"/>
        <end position="767"/>
    </location>
</feature>
<feature type="region of interest" description="Disordered" evidence="4">
    <location>
        <begin position="780"/>
        <end position="826"/>
    </location>
</feature>
<feature type="region of interest" description="Disordered" evidence="4">
    <location>
        <begin position="942"/>
        <end position="988"/>
    </location>
</feature>
<feature type="region of interest" description="Disordered" evidence="4">
    <location>
        <begin position="1043"/>
        <end position="1101"/>
    </location>
</feature>
<feature type="region of interest" description="Disordered" evidence="4">
    <location>
        <begin position="1132"/>
        <end position="1162"/>
    </location>
</feature>
<feature type="coiled-coil region" evidence="2">
    <location>
        <begin position="27"/>
        <end position="73"/>
    </location>
</feature>
<feature type="coiled-coil region" evidence="2">
    <location>
        <begin position="347"/>
        <end position="383"/>
    </location>
</feature>
<feature type="compositionally biased region" description="Basic and acidic residues" evidence="4">
    <location>
        <begin position="1"/>
        <end position="12"/>
    </location>
</feature>
<feature type="compositionally biased region" description="Acidic residues" evidence="4">
    <location>
        <begin position="13"/>
        <end position="31"/>
    </location>
</feature>
<feature type="compositionally biased region" description="Basic and acidic residues" evidence="4">
    <location>
        <begin position="32"/>
        <end position="46"/>
    </location>
</feature>
<feature type="compositionally biased region" description="Basic residues" evidence="4">
    <location>
        <begin position="47"/>
        <end position="73"/>
    </location>
</feature>
<feature type="compositionally biased region" description="Low complexity" evidence="4">
    <location>
        <begin position="179"/>
        <end position="188"/>
    </location>
</feature>
<feature type="compositionally biased region" description="Low complexity" evidence="4">
    <location>
        <begin position="493"/>
        <end position="502"/>
    </location>
</feature>
<feature type="compositionally biased region" description="Polar residues" evidence="4">
    <location>
        <begin position="512"/>
        <end position="522"/>
    </location>
</feature>
<feature type="compositionally biased region" description="Polar residues" evidence="4">
    <location>
        <begin position="564"/>
        <end position="587"/>
    </location>
</feature>
<feature type="compositionally biased region" description="Polar residues" evidence="4">
    <location>
        <begin position="713"/>
        <end position="728"/>
    </location>
</feature>
<feature type="compositionally biased region" description="Basic and acidic residues" evidence="4">
    <location>
        <begin position="753"/>
        <end position="767"/>
    </location>
</feature>
<feature type="compositionally biased region" description="Basic and acidic residues" evidence="4">
    <location>
        <begin position="955"/>
        <end position="967"/>
    </location>
</feature>
<feature type="compositionally biased region" description="Polar residues" evidence="4">
    <location>
        <begin position="1050"/>
        <end position="1064"/>
    </location>
</feature>
<feature type="compositionally biased region" description="Polar residues" evidence="4">
    <location>
        <begin position="1077"/>
        <end position="1093"/>
    </location>
</feature>
<feature type="modified residue" description="Phosphoserine" evidence="1">
    <location>
        <position position="1150"/>
    </location>
</feature>
<feature type="splice variant" id="VSP_010212" description="In isoform 2." evidence="5 6">
    <original>HRRISGSYMTSKKSQHNKKTNSKEYAESSFYSDDYFGNY</original>
    <variation>NSAITVVHLQNLIHLTQKFCTSEADLLRSPLTAVLTFCL</variation>
    <location>
        <begin position="113"/>
        <end position="151"/>
    </location>
</feature>
<feature type="splice variant" id="VSP_010213" description="In isoform 2." evidence="5 6">
    <location>
        <begin position="152"/>
        <end position="1177"/>
    </location>
</feature>
<feature type="sequence conflict" description="In Ref. 3; AAH43311." evidence="7" ref="3">
    <original>R</original>
    <variation>H</variation>
    <location>
        <position position="469"/>
    </location>
</feature>
<feature type="sequence conflict" description="In Ref. 3; AAH43311." evidence="7" ref="3">
    <original>K</original>
    <variation>N</variation>
    <location>
        <position position="482"/>
    </location>
</feature>
<feature type="sequence conflict" description="In Ref. 3; AAH43311." evidence="7" ref="3">
    <original>V</original>
    <variation>M</variation>
    <location>
        <position position="556"/>
    </location>
</feature>
<feature type="sequence conflict" description="In Ref. 3; AAH43311." evidence="7" ref="3">
    <original>R</original>
    <variation>H</variation>
    <location>
        <position position="629"/>
    </location>
</feature>
<keyword id="KW-0025">Alternative splicing</keyword>
<keyword id="KW-0175">Coiled coil</keyword>
<keyword id="KW-0479">Metal-binding</keyword>
<keyword id="KW-0597">Phosphoprotein</keyword>
<keyword id="KW-1185">Reference proteome</keyword>
<keyword id="KW-0677">Repeat</keyword>
<keyword id="KW-0862">Zinc</keyword>
<keyword id="KW-0863">Zinc-finger</keyword>
<name>ZC3H6_MOUSE</name>
<evidence type="ECO:0000250" key="1">
    <source>
        <dbReference type="UniProtKB" id="P61129"/>
    </source>
</evidence>
<evidence type="ECO:0000255" key="2"/>
<evidence type="ECO:0000255" key="3">
    <source>
        <dbReference type="PROSITE-ProRule" id="PRU00723"/>
    </source>
</evidence>
<evidence type="ECO:0000256" key="4">
    <source>
        <dbReference type="SAM" id="MobiDB-lite"/>
    </source>
</evidence>
<evidence type="ECO:0000303" key="5">
    <source>
    </source>
</evidence>
<evidence type="ECO:0000303" key="6">
    <source>
    </source>
</evidence>
<evidence type="ECO:0000305" key="7"/>
<reference key="1">
    <citation type="journal article" date="2005" name="Science">
        <title>The transcriptional landscape of the mammalian genome.</title>
        <authorList>
            <person name="Carninci P."/>
            <person name="Kasukawa T."/>
            <person name="Katayama S."/>
            <person name="Gough J."/>
            <person name="Frith M.C."/>
            <person name="Maeda N."/>
            <person name="Oyama R."/>
            <person name="Ravasi T."/>
            <person name="Lenhard B."/>
            <person name="Wells C."/>
            <person name="Kodzius R."/>
            <person name="Shimokawa K."/>
            <person name="Bajic V.B."/>
            <person name="Brenner S.E."/>
            <person name="Batalov S."/>
            <person name="Forrest A.R."/>
            <person name="Zavolan M."/>
            <person name="Davis M.J."/>
            <person name="Wilming L.G."/>
            <person name="Aidinis V."/>
            <person name="Allen J.E."/>
            <person name="Ambesi-Impiombato A."/>
            <person name="Apweiler R."/>
            <person name="Aturaliya R.N."/>
            <person name="Bailey T.L."/>
            <person name="Bansal M."/>
            <person name="Baxter L."/>
            <person name="Beisel K.W."/>
            <person name="Bersano T."/>
            <person name="Bono H."/>
            <person name="Chalk A.M."/>
            <person name="Chiu K.P."/>
            <person name="Choudhary V."/>
            <person name="Christoffels A."/>
            <person name="Clutterbuck D.R."/>
            <person name="Crowe M.L."/>
            <person name="Dalla E."/>
            <person name="Dalrymple B.P."/>
            <person name="de Bono B."/>
            <person name="Della Gatta G."/>
            <person name="di Bernardo D."/>
            <person name="Down T."/>
            <person name="Engstrom P."/>
            <person name="Fagiolini M."/>
            <person name="Faulkner G."/>
            <person name="Fletcher C.F."/>
            <person name="Fukushima T."/>
            <person name="Furuno M."/>
            <person name="Futaki S."/>
            <person name="Gariboldi M."/>
            <person name="Georgii-Hemming P."/>
            <person name="Gingeras T.R."/>
            <person name="Gojobori T."/>
            <person name="Green R.E."/>
            <person name="Gustincich S."/>
            <person name="Harbers M."/>
            <person name="Hayashi Y."/>
            <person name="Hensch T.K."/>
            <person name="Hirokawa N."/>
            <person name="Hill D."/>
            <person name="Huminiecki L."/>
            <person name="Iacono M."/>
            <person name="Ikeo K."/>
            <person name="Iwama A."/>
            <person name="Ishikawa T."/>
            <person name="Jakt M."/>
            <person name="Kanapin A."/>
            <person name="Katoh M."/>
            <person name="Kawasawa Y."/>
            <person name="Kelso J."/>
            <person name="Kitamura H."/>
            <person name="Kitano H."/>
            <person name="Kollias G."/>
            <person name="Krishnan S.P."/>
            <person name="Kruger A."/>
            <person name="Kummerfeld S.K."/>
            <person name="Kurochkin I.V."/>
            <person name="Lareau L.F."/>
            <person name="Lazarevic D."/>
            <person name="Lipovich L."/>
            <person name="Liu J."/>
            <person name="Liuni S."/>
            <person name="McWilliam S."/>
            <person name="Madan Babu M."/>
            <person name="Madera M."/>
            <person name="Marchionni L."/>
            <person name="Matsuda H."/>
            <person name="Matsuzawa S."/>
            <person name="Miki H."/>
            <person name="Mignone F."/>
            <person name="Miyake S."/>
            <person name="Morris K."/>
            <person name="Mottagui-Tabar S."/>
            <person name="Mulder N."/>
            <person name="Nakano N."/>
            <person name="Nakauchi H."/>
            <person name="Ng P."/>
            <person name="Nilsson R."/>
            <person name="Nishiguchi S."/>
            <person name="Nishikawa S."/>
            <person name="Nori F."/>
            <person name="Ohara O."/>
            <person name="Okazaki Y."/>
            <person name="Orlando V."/>
            <person name="Pang K.C."/>
            <person name="Pavan W.J."/>
            <person name="Pavesi G."/>
            <person name="Pesole G."/>
            <person name="Petrovsky N."/>
            <person name="Piazza S."/>
            <person name="Reed J."/>
            <person name="Reid J.F."/>
            <person name="Ring B.Z."/>
            <person name="Ringwald M."/>
            <person name="Rost B."/>
            <person name="Ruan Y."/>
            <person name="Salzberg S.L."/>
            <person name="Sandelin A."/>
            <person name="Schneider C."/>
            <person name="Schoenbach C."/>
            <person name="Sekiguchi K."/>
            <person name="Semple C.A."/>
            <person name="Seno S."/>
            <person name="Sessa L."/>
            <person name="Sheng Y."/>
            <person name="Shibata Y."/>
            <person name="Shimada H."/>
            <person name="Shimada K."/>
            <person name="Silva D."/>
            <person name="Sinclair B."/>
            <person name="Sperling S."/>
            <person name="Stupka E."/>
            <person name="Sugiura K."/>
            <person name="Sultana R."/>
            <person name="Takenaka Y."/>
            <person name="Taki K."/>
            <person name="Tammoja K."/>
            <person name="Tan S.L."/>
            <person name="Tang S."/>
            <person name="Taylor M.S."/>
            <person name="Tegner J."/>
            <person name="Teichmann S.A."/>
            <person name="Ueda H.R."/>
            <person name="van Nimwegen E."/>
            <person name="Verardo R."/>
            <person name="Wei C.L."/>
            <person name="Yagi K."/>
            <person name="Yamanishi H."/>
            <person name="Zabarovsky E."/>
            <person name="Zhu S."/>
            <person name="Zimmer A."/>
            <person name="Hide W."/>
            <person name="Bult C."/>
            <person name="Grimmond S.M."/>
            <person name="Teasdale R.D."/>
            <person name="Liu E.T."/>
            <person name="Brusic V."/>
            <person name="Quackenbush J."/>
            <person name="Wahlestedt C."/>
            <person name="Mattick J.S."/>
            <person name="Hume D.A."/>
            <person name="Kai C."/>
            <person name="Sasaki D."/>
            <person name="Tomaru Y."/>
            <person name="Fukuda S."/>
            <person name="Kanamori-Katayama M."/>
            <person name="Suzuki M."/>
            <person name="Aoki J."/>
            <person name="Arakawa T."/>
            <person name="Iida J."/>
            <person name="Imamura K."/>
            <person name="Itoh M."/>
            <person name="Kato T."/>
            <person name="Kawaji H."/>
            <person name="Kawagashira N."/>
            <person name="Kawashima T."/>
            <person name="Kojima M."/>
            <person name="Kondo S."/>
            <person name="Konno H."/>
            <person name="Nakano K."/>
            <person name="Ninomiya N."/>
            <person name="Nishio T."/>
            <person name="Okada M."/>
            <person name="Plessy C."/>
            <person name="Shibata K."/>
            <person name="Shiraki T."/>
            <person name="Suzuki S."/>
            <person name="Tagami M."/>
            <person name="Waki K."/>
            <person name="Watahiki A."/>
            <person name="Okamura-Oho Y."/>
            <person name="Suzuki H."/>
            <person name="Kawai J."/>
            <person name="Hayashizaki Y."/>
        </authorList>
    </citation>
    <scope>NUCLEOTIDE SEQUENCE [LARGE SCALE MRNA] (ISOFORM 2)</scope>
    <scope>NUCLEOTIDE SEQUENCE [LARGE SCALE MRNA] OF 215-1177 (ISOFORM 1)</scope>
    <source>
        <strain>C57BL/6J</strain>
        <tissue>Head</tissue>
        <tissue>Hypothalamus</tissue>
    </source>
</reference>
<reference key="2">
    <citation type="journal article" date="2009" name="PLoS Biol.">
        <title>Lineage-specific biology revealed by a finished genome assembly of the mouse.</title>
        <authorList>
            <person name="Church D.M."/>
            <person name="Goodstadt L."/>
            <person name="Hillier L.W."/>
            <person name="Zody M.C."/>
            <person name="Goldstein S."/>
            <person name="She X."/>
            <person name="Bult C.J."/>
            <person name="Agarwala R."/>
            <person name="Cherry J.L."/>
            <person name="DiCuccio M."/>
            <person name="Hlavina W."/>
            <person name="Kapustin Y."/>
            <person name="Meric P."/>
            <person name="Maglott D."/>
            <person name="Birtle Z."/>
            <person name="Marques A.C."/>
            <person name="Graves T."/>
            <person name="Zhou S."/>
            <person name="Teague B."/>
            <person name="Potamousis K."/>
            <person name="Churas C."/>
            <person name="Place M."/>
            <person name="Herschleb J."/>
            <person name="Runnheim R."/>
            <person name="Forrest D."/>
            <person name="Amos-Landgraf J."/>
            <person name="Schwartz D.C."/>
            <person name="Cheng Z."/>
            <person name="Lindblad-Toh K."/>
            <person name="Eichler E.E."/>
            <person name="Ponting C.P."/>
        </authorList>
    </citation>
    <scope>NUCLEOTIDE SEQUENCE [LARGE SCALE GENOMIC DNA]</scope>
    <source>
        <strain>C57BL/6J</strain>
    </source>
</reference>
<reference key="3">
    <citation type="journal article" date="2004" name="Genome Res.">
        <title>The status, quality, and expansion of the NIH full-length cDNA project: the Mammalian Gene Collection (MGC).</title>
        <authorList>
            <consortium name="The MGC Project Team"/>
        </authorList>
    </citation>
    <scope>NUCLEOTIDE SEQUENCE [LARGE SCALE MRNA] (ISOFORMS 1 AND 2)</scope>
    <source>
        <strain>Czech II</strain>
        <tissue>Mammary gland</tissue>
    </source>
</reference>
<gene>
    <name type="primary">Zc3h6</name>
    <name type="synonym">Zc3hdc6</name>
</gene>
<protein>
    <recommendedName>
        <fullName>Zinc finger CCCH domain-containing protein 6</fullName>
    </recommendedName>
</protein>
<proteinExistence type="evidence at transcript level"/>